<geneLocation type="chloroplast"/>
<name>PSBI_PSEMZ</name>
<protein>
    <recommendedName>
        <fullName evidence="1">Photosystem II reaction center protein I</fullName>
        <shortName evidence="1">PSII-I</shortName>
    </recommendedName>
    <alternativeName>
        <fullName evidence="1">PSII 4.8 kDa protein</fullName>
    </alternativeName>
</protein>
<keyword id="KW-0150">Chloroplast</keyword>
<keyword id="KW-0472">Membrane</keyword>
<keyword id="KW-0602">Photosynthesis</keyword>
<keyword id="KW-0604">Photosystem II</keyword>
<keyword id="KW-0934">Plastid</keyword>
<keyword id="KW-0674">Reaction center</keyword>
<keyword id="KW-0793">Thylakoid</keyword>
<keyword id="KW-0812">Transmembrane</keyword>
<keyword id="KW-1133">Transmembrane helix</keyword>
<organism>
    <name type="scientific">Pseudotsuga menziesii</name>
    <name type="common">Douglas-fir</name>
    <name type="synonym">Abies menziesii</name>
    <dbReference type="NCBI Taxonomy" id="3357"/>
    <lineage>
        <taxon>Eukaryota</taxon>
        <taxon>Viridiplantae</taxon>
        <taxon>Streptophyta</taxon>
        <taxon>Embryophyta</taxon>
        <taxon>Tracheophyta</taxon>
        <taxon>Spermatophyta</taxon>
        <taxon>Pinopsida</taxon>
        <taxon>Pinidae</taxon>
        <taxon>Conifers I</taxon>
        <taxon>Pinales</taxon>
        <taxon>Pinaceae</taxon>
        <taxon>Pseudotsuga</taxon>
    </lineage>
</organism>
<gene>
    <name evidence="1" type="primary">psbI</name>
</gene>
<evidence type="ECO:0000255" key="1">
    <source>
        <dbReference type="HAMAP-Rule" id="MF_01316"/>
    </source>
</evidence>
<feature type="chain" id="PRO_0000219649" description="Photosystem II reaction center protein I">
    <location>
        <begin position="1"/>
        <end position="36"/>
    </location>
</feature>
<feature type="transmembrane region" description="Helical" evidence="1">
    <location>
        <begin position="4"/>
        <end position="24"/>
    </location>
</feature>
<proteinExistence type="inferred from homology"/>
<sequence>MLTLKLFVYAVVIFFISLFIFGFLSNDPGRNPGRKE</sequence>
<comment type="function">
    <text evidence="1">One of the components of the core complex of photosystem II (PSII), required for its stability and/or assembly. PSII is a light-driven water:plastoquinone oxidoreductase that uses light energy to abstract electrons from H(2)O, generating O(2) and a proton gradient subsequently used for ATP formation. It consists of a core antenna complex that captures photons, and an electron transfer chain that converts photonic excitation into a charge separation.</text>
</comment>
<comment type="subunit">
    <text evidence="1">PSII is composed of 1 copy each of membrane proteins PsbA, PsbB, PsbC, PsbD, PsbE, PsbF, PsbH, PsbI, PsbJ, PsbK, PsbL, PsbM, PsbT, PsbX, PsbY, PsbZ, Psb30/Ycf12, at least 3 peripheral proteins of the oxygen-evolving complex and a large number of cofactors. It forms dimeric complexes.</text>
</comment>
<comment type="subcellular location">
    <subcellularLocation>
        <location evidence="1">Plastid</location>
        <location evidence="1">Chloroplast thylakoid membrane</location>
        <topology evidence="1">Single-pass membrane protein</topology>
    </subcellularLocation>
</comment>
<comment type="similarity">
    <text evidence="1">Belongs to the PsbI family.</text>
</comment>
<accession>P69559</accession>
<accession>P29796</accession>
<reference key="1">
    <citation type="submission" date="1989-09" db="EMBL/GenBank/DDBJ databases">
        <title>Nucleotide sequences of the Douglas-fir chloroplast DNA region containing the dispersed repeat and a tRNA-Serine genes.</title>
        <authorList>
            <person name="Tsai C.H."/>
            <person name="Strauss S.H."/>
        </authorList>
    </citation>
    <scope>NUCLEOTIDE SEQUENCE [GENOMIC DNA]</scope>
    <source>
        <tissue>Leaf</tissue>
    </source>
</reference>
<reference key="2">
    <citation type="journal article" date="1995" name="Curr. Genet.">
        <title>A mutation hotspot in the chloroplast genome of a conifer (Douglas-fir: Pseudotsuga) is caused by variability in the number of direct repeats derived from a partially duplicated tRNA gene.</title>
        <authorList>
            <person name="Hipkins V.D."/>
            <person name="Marshall K.A."/>
            <person name="Neale D.B."/>
            <person name="Rottmann W.H."/>
            <person name="Strauss S.H."/>
        </authorList>
    </citation>
    <scope>NUCLEOTIDE SEQUENCE [GENOMIC DNA]</scope>
</reference>
<dbReference type="EMBL" id="X16571">
    <property type="protein sequence ID" value="CAA34592.1"/>
    <property type="molecule type" value="Genomic_DNA"/>
</dbReference>
<dbReference type="EMBL" id="L20416">
    <property type="protein sequence ID" value="AAB01440.1"/>
    <property type="molecule type" value="Genomic_DNA"/>
</dbReference>
<dbReference type="EMBL" id="L20417">
    <property type="protein sequence ID" value="AAB01442.1"/>
    <property type="molecule type" value="Genomic_DNA"/>
</dbReference>
<dbReference type="PIR" id="S21421">
    <property type="entry name" value="F2KHID"/>
</dbReference>
<dbReference type="SMR" id="P69559"/>
<dbReference type="GO" id="GO:0009535">
    <property type="term" value="C:chloroplast thylakoid membrane"/>
    <property type="evidence" value="ECO:0007669"/>
    <property type="project" value="UniProtKB-SubCell"/>
</dbReference>
<dbReference type="GO" id="GO:0009539">
    <property type="term" value="C:photosystem II reaction center"/>
    <property type="evidence" value="ECO:0007669"/>
    <property type="project" value="InterPro"/>
</dbReference>
<dbReference type="GO" id="GO:0015979">
    <property type="term" value="P:photosynthesis"/>
    <property type="evidence" value="ECO:0007669"/>
    <property type="project" value="UniProtKB-UniRule"/>
</dbReference>
<dbReference type="HAMAP" id="MF_01316">
    <property type="entry name" value="PSII_PsbI"/>
    <property type="match status" value="1"/>
</dbReference>
<dbReference type="InterPro" id="IPR003686">
    <property type="entry name" value="PSII_PsbI"/>
</dbReference>
<dbReference type="InterPro" id="IPR037271">
    <property type="entry name" value="PSII_PsbI_sf"/>
</dbReference>
<dbReference type="NCBIfam" id="NF002735">
    <property type="entry name" value="PRK02655.1"/>
    <property type="match status" value="1"/>
</dbReference>
<dbReference type="PANTHER" id="PTHR35772">
    <property type="entry name" value="PHOTOSYSTEM II REACTION CENTER PROTEIN I"/>
    <property type="match status" value="1"/>
</dbReference>
<dbReference type="PANTHER" id="PTHR35772:SF1">
    <property type="entry name" value="PHOTOSYSTEM II REACTION CENTER PROTEIN I"/>
    <property type="match status" value="1"/>
</dbReference>
<dbReference type="Pfam" id="PF02532">
    <property type="entry name" value="PsbI"/>
    <property type="match status" value="1"/>
</dbReference>
<dbReference type="SUPFAM" id="SSF161041">
    <property type="entry name" value="Photosystem II reaction center protein I, PsbI"/>
    <property type="match status" value="1"/>
</dbReference>